<dbReference type="EC" id="7.1.1.2" evidence="1"/>
<dbReference type="Proteomes" id="UP000189706">
    <property type="component" value="Unplaced"/>
</dbReference>
<dbReference type="GO" id="GO:0005743">
    <property type="term" value="C:mitochondrial inner membrane"/>
    <property type="evidence" value="ECO:0000250"/>
    <property type="project" value="UniProtKB"/>
</dbReference>
<dbReference type="GO" id="GO:0008137">
    <property type="term" value="F:NADH dehydrogenase (ubiquinone) activity"/>
    <property type="evidence" value="ECO:0000250"/>
    <property type="project" value="UniProtKB"/>
</dbReference>
<dbReference type="GO" id="GO:0006120">
    <property type="term" value="P:mitochondrial electron transport, NADH to ubiquinone"/>
    <property type="evidence" value="ECO:0000250"/>
    <property type="project" value="UniProtKB"/>
</dbReference>
<dbReference type="GO" id="GO:0032981">
    <property type="term" value="P:mitochondrial respiratory chain complex I assembly"/>
    <property type="evidence" value="ECO:0000250"/>
    <property type="project" value="UniProtKB"/>
</dbReference>
<dbReference type="InterPro" id="IPR037232">
    <property type="entry name" value="NADH_quin_OxRdtase_su_C/D-like"/>
</dbReference>
<dbReference type="InterPro" id="IPR001268">
    <property type="entry name" value="NADH_UbQ_OxRdtase_30kDa_su"/>
</dbReference>
<dbReference type="PANTHER" id="PTHR10884:SF14">
    <property type="entry name" value="NADH DEHYDROGENASE [UBIQUINONE] IRON-SULFUR PROTEIN 3, MITOCHONDRIAL"/>
    <property type="match status" value="1"/>
</dbReference>
<dbReference type="PANTHER" id="PTHR10884">
    <property type="entry name" value="NADH DEHYDROGENASE UBIQUINONE IRON-SULFUR PROTEIN 3"/>
    <property type="match status" value="1"/>
</dbReference>
<dbReference type="Pfam" id="PF00329">
    <property type="entry name" value="Complex1_30kDa"/>
    <property type="match status" value="1"/>
</dbReference>
<dbReference type="SUPFAM" id="SSF143243">
    <property type="entry name" value="Nqo5-like"/>
    <property type="match status" value="1"/>
</dbReference>
<protein>
    <recommendedName>
        <fullName evidence="2">NADH dehydrogenase [ubiquinone] iron-sulfur protein 3, mitochondrial</fullName>
        <ecNumber evidence="1">7.1.1.2</ecNumber>
    </recommendedName>
    <alternativeName>
        <fullName evidence="2">Complex I-30kD</fullName>
        <shortName evidence="2">CI-30kD</shortName>
    </alternativeName>
    <alternativeName>
        <fullName evidence="2">NADH-ubiquinone oxidoreductase 30 kDa subunit</fullName>
    </alternativeName>
</protein>
<evidence type="ECO:0000250" key="1">
    <source>
        <dbReference type="UniProtKB" id="O75489"/>
    </source>
</evidence>
<evidence type="ECO:0000250" key="2">
    <source>
        <dbReference type="UniProtKB" id="P23709"/>
    </source>
</evidence>
<evidence type="ECO:0000255" key="3"/>
<evidence type="ECO:0000305" key="4"/>
<keyword id="KW-0249">Electron transport</keyword>
<keyword id="KW-0472">Membrane</keyword>
<keyword id="KW-0496">Mitochondrion</keyword>
<keyword id="KW-0999">Mitochondrion inner membrane</keyword>
<keyword id="KW-0520">NAD</keyword>
<keyword id="KW-0560">Oxidoreductase</keyword>
<keyword id="KW-1185">Reference proteome</keyword>
<keyword id="KW-0679">Respiratory chain</keyword>
<keyword id="KW-1278">Translocase</keyword>
<keyword id="KW-0813">Transport</keyword>
<keyword id="KW-0830">Ubiquinone</keyword>
<name>NDUS3_MESAU</name>
<feature type="chain" id="PRO_0000394305" description="NADH dehydrogenase [ubiquinone] iron-sulfur protein 3, mitochondrial">
    <location>
        <begin position="1" status="less than"/>
        <end position="94" status="greater than"/>
    </location>
</feature>
<feature type="non-consecutive residues" evidence="4">
    <location>
        <begin position="14"/>
        <end position="15"/>
    </location>
</feature>
<feature type="non-consecutive residues" evidence="4">
    <location>
        <begin position="28"/>
        <end position="29"/>
    </location>
</feature>
<feature type="non-consecutive residues" evidence="4">
    <location>
        <begin position="45"/>
        <end position="46"/>
    </location>
</feature>
<feature type="non-consecutive residues" evidence="4">
    <location>
        <begin position="59"/>
        <end position="60"/>
    </location>
</feature>
<feature type="non-terminal residue">
    <location>
        <position position="1"/>
    </location>
</feature>
<feature type="non-terminal residue">
    <location>
        <position position="94"/>
    </location>
</feature>
<proteinExistence type="evidence at protein level"/>
<organism>
    <name type="scientific">Mesocricetus auratus</name>
    <name type="common">Golden hamster</name>
    <dbReference type="NCBI Taxonomy" id="10036"/>
    <lineage>
        <taxon>Eukaryota</taxon>
        <taxon>Metazoa</taxon>
        <taxon>Chordata</taxon>
        <taxon>Craniata</taxon>
        <taxon>Vertebrata</taxon>
        <taxon>Euteleostomi</taxon>
        <taxon>Mammalia</taxon>
        <taxon>Eutheria</taxon>
        <taxon>Euarchontoglires</taxon>
        <taxon>Glires</taxon>
        <taxon>Rodentia</taxon>
        <taxon>Myomorpha</taxon>
        <taxon>Muroidea</taxon>
        <taxon>Cricetidae</taxon>
        <taxon>Cricetinae</taxon>
        <taxon>Mesocricetus</taxon>
    </lineage>
</organism>
<comment type="function">
    <text evidence="1">Core subunit of the mitochondrial membrane respiratory chain NADH dehydrogenase (Complex I) which catalyzes electron transfer from NADH through the respiratory chain, using ubiquinone as an electron acceptor (By similarity). Essential for the catalytic activity and assembly of complex I (By similarity).</text>
</comment>
<comment type="catalytic activity">
    <reaction evidence="1">
        <text>a ubiquinone + NADH + 5 H(+)(in) = a ubiquinol + NAD(+) + 4 H(+)(out)</text>
        <dbReference type="Rhea" id="RHEA:29091"/>
        <dbReference type="Rhea" id="RHEA-COMP:9565"/>
        <dbReference type="Rhea" id="RHEA-COMP:9566"/>
        <dbReference type="ChEBI" id="CHEBI:15378"/>
        <dbReference type="ChEBI" id="CHEBI:16389"/>
        <dbReference type="ChEBI" id="CHEBI:17976"/>
        <dbReference type="ChEBI" id="CHEBI:57540"/>
        <dbReference type="ChEBI" id="CHEBI:57945"/>
        <dbReference type="EC" id="7.1.1.2"/>
    </reaction>
</comment>
<comment type="subunit">
    <text evidence="1">Core subunit of respiratory chain NADH dehydrogenase (Complex I) which is composed of 45 different subunits (By similarity). Interacts with NDUFAF3 (By similarity). Interacts with RAB5IF (By similarity). Found in subcomplexes containing subunits NDUFS2, MT-ND1 and NDUFA13 (By similarity).</text>
</comment>
<comment type="subcellular location">
    <subcellularLocation>
        <location evidence="1">Mitochondrion inner membrane</location>
        <topology evidence="1">Peripheral membrane protein</topology>
        <orientation evidence="1">Matrix side</orientation>
    </subcellularLocation>
</comment>
<comment type="similarity">
    <text evidence="3">Belongs to the complex I 30 kDa subunit family.</text>
</comment>
<reference key="1">
    <citation type="journal article" date="2010" name="Asian J. Androl.">
        <title>Glucose-regulated protein precursor (GRP78) and tumor rejection antigen (GP96) are unique to hamster caput epididymal spermatozoa.</title>
        <authorList>
            <person name="Kameshwari D.B."/>
            <person name="Bhande S."/>
            <person name="Sundaram C.S."/>
            <person name="Kota V."/>
            <person name="Siva A.B."/>
            <person name="Shivaji S."/>
        </authorList>
    </citation>
    <scope>IDENTIFICATION BY MASS SPECTROMETRY</scope>
</reference>
<sequence length="94" mass="11107">VCCRGLLGAASVGRQNRFEIVYNLLSLREVWDMFGVFFFNHPDLRILTDYGFEGHPFRKYDDEVKRVVAEPVELAQEFRKFDLNSPWEAFPAYR</sequence>
<accession>P86217</accession>
<gene>
    <name evidence="2" type="primary">NDUFS3</name>
</gene>